<comment type="similarity">
    <text evidence="1">Belongs to the universal ribosomal protein uS2 family.</text>
</comment>
<reference key="1">
    <citation type="submission" date="2006-12" db="EMBL/GenBank/DDBJ databases">
        <title>Complete sequence of chromosome 2 of Paracoccus denitrificans PD1222.</title>
        <authorList>
            <person name="Copeland A."/>
            <person name="Lucas S."/>
            <person name="Lapidus A."/>
            <person name="Barry K."/>
            <person name="Detter J.C."/>
            <person name="Glavina del Rio T."/>
            <person name="Hammon N."/>
            <person name="Israni S."/>
            <person name="Dalin E."/>
            <person name="Tice H."/>
            <person name="Pitluck S."/>
            <person name="Munk A.C."/>
            <person name="Brettin T."/>
            <person name="Bruce D."/>
            <person name="Han C."/>
            <person name="Tapia R."/>
            <person name="Gilna P."/>
            <person name="Schmutz J."/>
            <person name="Larimer F."/>
            <person name="Land M."/>
            <person name="Hauser L."/>
            <person name="Kyrpides N."/>
            <person name="Lykidis A."/>
            <person name="Spiro S."/>
            <person name="Richardson D.J."/>
            <person name="Moir J.W.B."/>
            <person name="Ferguson S.J."/>
            <person name="van Spanning R.J.M."/>
            <person name="Richardson P."/>
        </authorList>
    </citation>
    <scope>NUCLEOTIDE SEQUENCE [LARGE SCALE GENOMIC DNA]</scope>
    <source>
        <strain>Pd 1222</strain>
    </source>
</reference>
<organism>
    <name type="scientific">Paracoccus denitrificans (strain Pd 1222)</name>
    <dbReference type="NCBI Taxonomy" id="318586"/>
    <lineage>
        <taxon>Bacteria</taxon>
        <taxon>Pseudomonadati</taxon>
        <taxon>Pseudomonadota</taxon>
        <taxon>Alphaproteobacteria</taxon>
        <taxon>Rhodobacterales</taxon>
        <taxon>Paracoccaceae</taxon>
        <taxon>Paracoccus</taxon>
    </lineage>
</organism>
<protein>
    <recommendedName>
        <fullName evidence="1">Small ribosomal subunit protein uS2</fullName>
    </recommendedName>
    <alternativeName>
        <fullName evidence="2">30S ribosomal protein S2</fullName>
    </alternativeName>
</protein>
<gene>
    <name evidence="1" type="primary">rpsB</name>
    <name type="ordered locus">Pden_3726</name>
</gene>
<dbReference type="EMBL" id="CP000490">
    <property type="protein sequence ID" value="ABL71793.1"/>
    <property type="molecule type" value="Genomic_DNA"/>
</dbReference>
<dbReference type="RefSeq" id="WP_011749962.1">
    <property type="nucleotide sequence ID" value="NC_008687.1"/>
</dbReference>
<dbReference type="SMR" id="A1B8E9"/>
<dbReference type="STRING" id="318586.Pden_3726"/>
<dbReference type="EnsemblBacteria" id="ABL71793">
    <property type="protein sequence ID" value="ABL71793"/>
    <property type="gene ID" value="Pden_3726"/>
</dbReference>
<dbReference type="GeneID" id="93453382"/>
<dbReference type="KEGG" id="pde:Pden_3726"/>
<dbReference type="eggNOG" id="COG0052">
    <property type="taxonomic scope" value="Bacteria"/>
</dbReference>
<dbReference type="HOGENOM" id="CLU_040318_2_1_5"/>
<dbReference type="OrthoDB" id="9808036at2"/>
<dbReference type="Proteomes" id="UP000000361">
    <property type="component" value="Chromosome 2"/>
</dbReference>
<dbReference type="GO" id="GO:0022627">
    <property type="term" value="C:cytosolic small ribosomal subunit"/>
    <property type="evidence" value="ECO:0007669"/>
    <property type="project" value="TreeGrafter"/>
</dbReference>
<dbReference type="GO" id="GO:0003735">
    <property type="term" value="F:structural constituent of ribosome"/>
    <property type="evidence" value="ECO:0007669"/>
    <property type="project" value="InterPro"/>
</dbReference>
<dbReference type="GO" id="GO:0006412">
    <property type="term" value="P:translation"/>
    <property type="evidence" value="ECO:0007669"/>
    <property type="project" value="UniProtKB-UniRule"/>
</dbReference>
<dbReference type="CDD" id="cd01425">
    <property type="entry name" value="RPS2"/>
    <property type="match status" value="1"/>
</dbReference>
<dbReference type="FunFam" id="1.10.287.610:FF:000001">
    <property type="entry name" value="30S ribosomal protein S2"/>
    <property type="match status" value="1"/>
</dbReference>
<dbReference type="Gene3D" id="3.40.50.10490">
    <property type="entry name" value="Glucose-6-phosphate isomerase like protein, domain 1"/>
    <property type="match status" value="1"/>
</dbReference>
<dbReference type="Gene3D" id="1.10.287.610">
    <property type="entry name" value="Helix hairpin bin"/>
    <property type="match status" value="1"/>
</dbReference>
<dbReference type="HAMAP" id="MF_00291_B">
    <property type="entry name" value="Ribosomal_uS2_B"/>
    <property type="match status" value="1"/>
</dbReference>
<dbReference type="InterPro" id="IPR001865">
    <property type="entry name" value="Ribosomal_uS2"/>
</dbReference>
<dbReference type="InterPro" id="IPR005706">
    <property type="entry name" value="Ribosomal_uS2_bac/mit/plastid"/>
</dbReference>
<dbReference type="InterPro" id="IPR018130">
    <property type="entry name" value="Ribosomal_uS2_CS"/>
</dbReference>
<dbReference type="InterPro" id="IPR023591">
    <property type="entry name" value="Ribosomal_uS2_flav_dom_sf"/>
</dbReference>
<dbReference type="NCBIfam" id="TIGR01011">
    <property type="entry name" value="rpsB_bact"/>
    <property type="match status" value="1"/>
</dbReference>
<dbReference type="PANTHER" id="PTHR12534">
    <property type="entry name" value="30S RIBOSOMAL PROTEIN S2 PROKARYOTIC AND ORGANELLAR"/>
    <property type="match status" value="1"/>
</dbReference>
<dbReference type="PANTHER" id="PTHR12534:SF0">
    <property type="entry name" value="SMALL RIBOSOMAL SUBUNIT PROTEIN US2M"/>
    <property type="match status" value="1"/>
</dbReference>
<dbReference type="Pfam" id="PF00318">
    <property type="entry name" value="Ribosomal_S2"/>
    <property type="match status" value="1"/>
</dbReference>
<dbReference type="PRINTS" id="PR00395">
    <property type="entry name" value="RIBOSOMALS2"/>
</dbReference>
<dbReference type="SUPFAM" id="SSF52313">
    <property type="entry name" value="Ribosomal protein S2"/>
    <property type="match status" value="1"/>
</dbReference>
<dbReference type="PROSITE" id="PS00963">
    <property type="entry name" value="RIBOSOMAL_S2_2"/>
    <property type="match status" value="1"/>
</dbReference>
<accession>A1B8E9</accession>
<sequence>MDMALPEFSMRQLLEAGVHYGHQTQRWNPRMAEFIYGERNGIHIVDLTQTVPMLDAALQVVRDTVAKGGRVLFVGTKRQAQKAVADAAERSAQFYMNHRWLGGTLTNWKTVSQSIQRLKALDETLGSGAEGLTKKERLQMEREQAKLQASLGGIREMGGLPDLLFVIDVNKEDLAIAEAKKLGIPVVAVVDTNCSPKGVDYVIPGNDDAARAIALYCDLVSRAALDGMTAQMGAAGVDLGALEASVEEELTGETAEEAAEA</sequence>
<feature type="chain" id="PRO_0000352022" description="Small ribosomal subunit protein uS2">
    <location>
        <begin position="1"/>
        <end position="261"/>
    </location>
</feature>
<evidence type="ECO:0000255" key="1">
    <source>
        <dbReference type="HAMAP-Rule" id="MF_00291"/>
    </source>
</evidence>
<evidence type="ECO:0000305" key="2"/>
<proteinExistence type="inferred from homology"/>
<keyword id="KW-1185">Reference proteome</keyword>
<keyword id="KW-0687">Ribonucleoprotein</keyword>
<keyword id="KW-0689">Ribosomal protein</keyword>
<name>RS2_PARDP</name>